<reference key="1">
    <citation type="journal article" date="2002" name="Mol. Biol. Cell">
        <title>ISWI remodeling complexes in Xenopus egg extracts: identification as major chromosomal components that are regulated by INCENP-aurora B.</title>
        <authorList>
            <person name="MacCallum D.E."/>
            <person name="Losada A."/>
            <person name="Kobayashi R."/>
            <person name="Hirano T."/>
        </authorList>
    </citation>
    <scope>NUCLEOTIDE SEQUENCE [MRNA]</scope>
    <scope>FUNCTION</scope>
    <scope>SUBUNIT</scope>
    <scope>PHOSPHORYLATION</scope>
</reference>
<feature type="chain" id="PRO_0000211169" description="Bromodomain adjacent to zinc finger domain protein 1A">
    <location>
        <begin position="1" status="less than"/>
        <end position="627"/>
    </location>
</feature>
<feature type="domain" description="Bromo" evidence="4">
    <location>
        <begin position="502"/>
        <end position="605"/>
    </location>
</feature>
<feature type="zinc finger region" description="PHD-type" evidence="5">
    <location>
        <begin position="222"/>
        <end position="272"/>
    </location>
</feature>
<feature type="region of interest" description="Disordered" evidence="6">
    <location>
        <begin position="270"/>
        <end position="503"/>
    </location>
</feature>
<feature type="coiled-coil region" evidence="3">
    <location>
        <begin position="281"/>
        <end position="327"/>
    </location>
</feature>
<feature type="compositionally biased region" description="Basic residues" evidence="6">
    <location>
        <begin position="272"/>
        <end position="283"/>
    </location>
</feature>
<feature type="compositionally biased region" description="Acidic residues" evidence="6">
    <location>
        <begin position="287"/>
        <end position="326"/>
    </location>
</feature>
<feature type="compositionally biased region" description="Low complexity" evidence="6">
    <location>
        <begin position="348"/>
        <end position="359"/>
    </location>
</feature>
<feature type="compositionally biased region" description="Polar residues" evidence="6">
    <location>
        <begin position="386"/>
        <end position="395"/>
    </location>
</feature>
<feature type="compositionally biased region" description="Polar residues" evidence="6">
    <location>
        <begin position="402"/>
        <end position="412"/>
    </location>
</feature>
<feature type="compositionally biased region" description="Basic residues" evidence="6">
    <location>
        <begin position="417"/>
        <end position="431"/>
    </location>
</feature>
<feature type="compositionally biased region" description="Polar residues" evidence="6">
    <location>
        <begin position="486"/>
        <end position="496"/>
    </location>
</feature>
<feature type="non-terminal residue">
    <location>
        <position position="1"/>
    </location>
</feature>
<dbReference type="EMBL" id="AF412332">
    <property type="protein sequence ID" value="AAL60160.1"/>
    <property type="molecule type" value="mRNA"/>
</dbReference>
<dbReference type="SMR" id="Q8UVR5"/>
<dbReference type="AGR" id="Xenbase:XB-GENE-986585"/>
<dbReference type="Xenbase" id="XB-GENE-986585">
    <property type="gene designation" value="baz1a.S"/>
</dbReference>
<dbReference type="Proteomes" id="UP000186698">
    <property type="component" value="Unplaced"/>
</dbReference>
<dbReference type="GO" id="GO:0008623">
    <property type="term" value="C:CHRAC"/>
    <property type="evidence" value="ECO:0000318"/>
    <property type="project" value="GO_Central"/>
</dbReference>
<dbReference type="GO" id="GO:0000228">
    <property type="term" value="C:nuclear chromosome"/>
    <property type="evidence" value="ECO:0000318"/>
    <property type="project" value="GO_Central"/>
</dbReference>
<dbReference type="GO" id="GO:0005634">
    <property type="term" value="C:nucleus"/>
    <property type="evidence" value="ECO:0000250"/>
    <property type="project" value="UniProtKB"/>
</dbReference>
<dbReference type="GO" id="GO:0003677">
    <property type="term" value="F:DNA binding"/>
    <property type="evidence" value="ECO:0000318"/>
    <property type="project" value="GO_Central"/>
</dbReference>
<dbReference type="GO" id="GO:0008270">
    <property type="term" value="F:zinc ion binding"/>
    <property type="evidence" value="ECO:0007669"/>
    <property type="project" value="UniProtKB-KW"/>
</dbReference>
<dbReference type="GO" id="GO:0006338">
    <property type="term" value="P:chromatin remodeling"/>
    <property type="evidence" value="ECO:0007669"/>
    <property type="project" value="InterPro"/>
</dbReference>
<dbReference type="GO" id="GO:0045740">
    <property type="term" value="P:positive regulation of DNA replication"/>
    <property type="evidence" value="ECO:0000318"/>
    <property type="project" value="GO_Central"/>
</dbReference>
<dbReference type="GO" id="GO:0006355">
    <property type="term" value="P:regulation of DNA-templated transcription"/>
    <property type="evidence" value="ECO:0000318"/>
    <property type="project" value="GO_Central"/>
</dbReference>
<dbReference type="GO" id="GO:0031445">
    <property type="term" value="P:regulation of heterochromatin formation"/>
    <property type="evidence" value="ECO:0000318"/>
    <property type="project" value="GO_Central"/>
</dbReference>
<dbReference type="CDD" id="cd05504">
    <property type="entry name" value="Bromo_Acf1_like"/>
    <property type="match status" value="1"/>
</dbReference>
<dbReference type="CDD" id="cd15627">
    <property type="entry name" value="PHD_BAZ1A"/>
    <property type="match status" value="1"/>
</dbReference>
<dbReference type="FunFam" id="3.30.40.10:FF:000300">
    <property type="entry name" value="Bromodomain adjacent to zinc finger domain protein 1A"/>
    <property type="match status" value="1"/>
</dbReference>
<dbReference type="Gene3D" id="1.20.920.10">
    <property type="entry name" value="Bromodomain-like"/>
    <property type="match status" value="1"/>
</dbReference>
<dbReference type="Gene3D" id="3.30.40.10">
    <property type="entry name" value="Zinc/RING finger domain, C3HC4 (zinc finger)"/>
    <property type="match status" value="1"/>
</dbReference>
<dbReference type="InterPro" id="IPR037325">
    <property type="entry name" value="Acf1_Bromo"/>
</dbReference>
<dbReference type="InterPro" id="IPR047171">
    <property type="entry name" value="BAZ1A"/>
</dbReference>
<dbReference type="InterPro" id="IPR001487">
    <property type="entry name" value="Bromodomain"/>
</dbReference>
<dbReference type="InterPro" id="IPR036427">
    <property type="entry name" value="Bromodomain-like_sf"/>
</dbReference>
<dbReference type="InterPro" id="IPR018359">
    <property type="entry name" value="Bromodomain_CS"/>
</dbReference>
<dbReference type="InterPro" id="IPR019786">
    <property type="entry name" value="Zinc_finger_PHD-type_CS"/>
</dbReference>
<dbReference type="InterPro" id="IPR011011">
    <property type="entry name" value="Znf_FYVE_PHD"/>
</dbReference>
<dbReference type="InterPro" id="IPR001965">
    <property type="entry name" value="Znf_PHD"/>
</dbReference>
<dbReference type="InterPro" id="IPR019787">
    <property type="entry name" value="Znf_PHD-finger"/>
</dbReference>
<dbReference type="InterPro" id="IPR013083">
    <property type="entry name" value="Znf_RING/FYVE/PHD"/>
</dbReference>
<dbReference type="PANTHER" id="PTHR46510">
    <property type="entry name" value="BROMODOMAIN ADJACENT TO ZINC FINGER DOMAIN PROTEIN 1A"/>
    <property type="match status" value="1"/>
</dbReference>
<dbReference type="PANTHER" id="PTHR46510:SF1">
    <property type="entry name" value="BROMODOMAIN ADJACENT TO ZINC FINGER DOMAIN PROTEIN 1A"/>
    <property type="match status" value="1"/>
</dbReference>
<dbReference type="Pfam" id="PF00439">
    <property type="entry name" value="Bromodomain"/>
    <property type="match status" value="1"/>
</dbReference>
<dbReference type="Pfam" id="PF00628">
    <property type="entry name" value="PHD"/>
    <property type="match status" value="1"/>
</dbReference>
<dbReference type="PRINTS" id="PR00503">
    <property type="entry name" value="BROMODOMAIN"/>
</dbReference>
<dbReference type="SMART" id="SM00297">
    <property type="entry name" value="BROMO"/>
    <property type="match status" value="1"/>
</dbReference>
<dbReference type="SMART" id="SM00249">
    <property type="entry name" value="PHD"/>
    <property type="match status" value="1"/>
</dbReference>
<dbReference type="SUPFAM" id="SSF47370">
    <property type="entry name" value="Bromodomain"/>
    <property type="match status" value="1"/>
</dbReference>
<dbReference type="SUPFAM" id="SSF57903">
    <property type="entry name" value="FYVE/PHD zinc finger"/>
    <property type="match status" value="1"/>
</dbReference>
<dbReference type="PROSITE" id="PS00633">
    <property type="entry name" value="BROMODOMAIN_1"/>
    <property type="match status" value="1"/>
</dbReference>
<dbReference type="PROSITE" id="PS50014">
    <property type="entry name" value="BROMODOMAIN_2"/>
    <property type="match status" value="1"/>
</dbReference>
<dbReference type="PROSITE" id="PS01359">
    <property type="entry name" value="ZF_PHD_1"/>
    <property type="match status" value="1"/>
</dbReference>
<dbReference type="PROSITE" id="PS50016">
    <property type="entry name" value="ZF_PHD_2"/>
    <property type="match status" value="1"/>
</dbReference>
<sequence>KSKICQRLDSFPVNRFNIADNTPPTLDFKPFRGKLLNASESGPVSAEKQLELRLCDLILDIEDRIYQGTLGAVKVPDRQLWRSALENNTLELLNDEAKENGSSKPINHEMEEMEIDIKQSAKDRLLGLKNDTPSATSTSTNTPQPVNNAVRYLARALHQIEQGVERKYLKAPLGDASESGRVQRTVLDRCGESLLSSGSFSQIFLHLSTLDRSILWSRSILNARCKVCRKKGDGESMVLCDGCDRGHHIYCVRPKLKYVPEGDWFCPECHPKQRSHRLPSRHRYSMDSDEEEEEELDQKEEEEEEEEQEELSESENEQEDEMSEEESPPKRGRAKVQLPLKMRGGKATGKLGPKPKTGKQSTPKNTQPAPEGRGQGKKTRSAPSLEPTSRLSASDSPAHGVSPNSSLVNVVTVNGRGRGKGKGRGRGRGRLQKSADNTPASSPFAFRPFSLDSNEPTPPGRKPRSQSLLPSQAEPKGKGKKRLSGDISSLEQGNRRSSGRHHGVHELSACEQLVVELVRHDDSWPFMRLVSKNQVPDYFDVIQRPIALNLIREKVNKCEYKCASEFIDDVHLMWSNCFEYNHHNSNEAKAGIRLQSFFITEAQNLGLEVSPNNRAPAKTPPAKRSRF</sequence>
<organism>
    <name type="scientific">Xenopus laevis</name>
    <name type="common">African clawed frog</name>
    <dbReference type="NCBI Taxonomy" id="8355"/>
    <lineage>
        <taxon>Eukaryota</taxon>
        <taxon>Metazoa</taxon>
        <taxon>Chordata</taxon>
        <taxon>Craniata</taxon>
        <taxon>Vertebrata</taxon>
        <taxon>Euteleostomi</taxon>
        <taxon>Amphibia</taxon>
        <taxon>Batrachia</taxon>
        <taxon>Anura</taxon>
        <taxon>Pipoidea</taxon>
        <taxon>Pipidae</taxon>
        <taxon>Xenopodinae</taxon>
        <taxon>Xenopus</taxon>
        <taxon>Xenopus</taxon>
    </lineage>
</organism>
<proteinExistence type="evidence at protein level"/>
<name>BAZ1A_XENLA</name>
<keyword id="KW-0103">Bromodomain</keyword>
<keyword id="KW-0175">Coiled coil</keyword>
<keyword id="KW-0479">Metal-binding</keyword>
<keyword id="KW-0539">Nucleus</keyword>
<keyword id="KW-0597">Phosphoprotein</keyword>
<keyword id="KW-1185">Reference proteome</keyword>
<keyword id="KW-0804">Transcription</keyword>
<keyword id="KW-0805">Transcription regulation</keyword>
<keyword id="KW-0862">Zinc</keyword>
<keyword id="KW-0863">Zinc-finger</keyword>
<comment type="function">
    <text evidence="2 7">Regulatory subunit of a chromatin remodeling complex, which forms ordered nucleosome arrays on chromatin and slides edge- and center-positioned histone octamers away from their original location on the DNA template to facilitate access to DNA during DNA-templated processes such as DNA replication, transcription, and repair (By similarity). Involved in regulating the spacing of nucleosomes along the chromatin and have the ability to slide mononucleosomes to the center of a DNA template in an ATP-dependent manner (By similarity). May play a role in transcriptional regulation (PubMed:11809820).</text>
</comment>
<comment type="subunit">
    <text evidence="7">Together with p18 and p20 proteins, it forms the Xenopus version of CHRAC.</text>
</comment>
<comment type="subcellular location">
    <subcellularLocation>
        <location evidence="1">Nucleus</location>
    </subcellularLocation>
</comment>
<comment type="PTM">
    <text evidence="7">Phosphorylated in mitosis.</text>
</comment>
<comment type="similarity">
    <text evidence="8">Belongs to the WAL family.</text>
</comment>
<evidence type="ECO:0000250" key="1">
    <source>
        <dbReference type="UniProtKB" id="O88379"/>
    </source>
</evidence>
<evidence type="ECO:0000250" key="2">
    <source>
        <dbReference type="UniProtKB" id="Q9NRL2"/>
    </source>
</evidence>
<evidence type="ECO:0000255" key="3"/>
<evidence type="ECO:0000255" key="4">
    <source>
        <dbReference type="PROSITE-ProRule" id="PRU00035"/>
    </source>
</evidence>
<evidence type="ECO:0000255" key="5">
    <source>
        <dbReference type="PROSITE-ProRule" id="PRU00146"/>
    </source>
</evidence>
<evidence type="ECO:0000256" key="6">
    <source>
        <dbReference type="SAM" id="MobiDB-lite"/>
    </source>
</evidence>
<evidence type="ECO:0000269" key="7">
    <source>
    </source>
</evidence>
<evidence type="ECO:0000305" key="8"/>
<gene>
    <name type="primary">baz1a</name>
    <name type="synonym">acf1</name>
</gene>
<accession>Q8UVR5</accession>
<protein>
    <recommendedName>
        <fullName>Bromodomain adjacent to zinc finger domain protein 1A</fullName>
    </recommendedName>
    <alternativeName>
        <fullName>ATP-utilizing chromatin assembly and remodeling factor 1</fullName>
        <shortName>xACF1</shortName>
    </alternativeName>
</protein>